<name>ACT1_PLABA</name>
<sequence>MGDEEVQALVIDNGSGNVKAGVAGDDAPRSVFPSIVGRPKNPGIMVGMEEKDAFVGDEAQTKRGILTLKYPIEHGIVTNWDDMEKIWHHTFYNELRAAPEEHPVLLTEAPLNPKGNRERMTQIMFESFNVPAMYVAIQAVLSLYSSGRTTGIVLDSGDGVSHTVPIYEGYALPHAIMRLDLAGRDLTEYLMKILHERGYGFSTSAEKEIVRDIKEKLCYIALNFDEEMKTSEQSSDIEKSYELPDGNIITVGNERFRCPEALFQPSFLGKEAAGIHTTTFNSIKKCDVDIRKDLYGNIVLSGGTTMYEGIGERLTRDITTLAPSTMKIKVVAPPERKYSVWIGGSILSSLSTFQQMWITKEEYDESGPSIVHRKCF</sequence>
<keyword id="KW-0002">3D-structure</keyword>
<keyword id="KW-0067">ATP-binding</keyword>
<keyword id="KW-0963">Cytoplasm</keyword>
<keyword id="KW-0206">Cytoskeleton</keyword>
<keyword id="KW-0378">Hydrolase</keyword>
<keyword id="KW-0547">Nucleotide-binding</keyword>
<keyword id="KW-0539">Nucleus</keyword>
<keyword id="KW-1185">Reference proteome</keyword>
<organism>
    <name type="scientific">Plasmodium berghei (strain Anka)</name>
    <dbReference type="NCBI Taxonomy" id="5823"/>
    <lineage>
        <taxon>Eukaryota</taxon>
        <taxon>Sar</taxon>
        <taxon>Alveolata</taxon>
        <taxon>Apicomplexa</taxon>
        <taxon>Aconoidasida</taxon>
        <taxon>Haemosporida</taxon>
        <taxon>Plasmodiidae</taxon>
        <taxon>Plasmodium</taxon>
        <taxon>Plasmodium (Vinckeia)</taxon>
    </lineage>
</organism>
<gene>
    <name evidence="2" type="primary">ACT1</name>
    <name evidence="6" type="synonym">ACTI</name>
    <name type="ORF">PB000323.01.0</name>
    <name type="ORF">PBANKA_1459300</name>
</gene>
<reference evidence="10" key="1">
    <citation type="journal article" date="2014" name="BMC Biol.">
        <title>A comprehensive evaluation of rodent malaria parasite genomes and gene expression.</title>
        <authorList>
            <person name="Otto T.D."/>
            <person name="Bohme U."/>
            <person name="Jackson A.P."/>
            <person name="Hunt M."/>
            <person name="Franke-Fayard B."/>
            <person name="Hoeijmakers W.A."/>
            <person name="Religa A.A."/>
            <person name="Robertson L."/>
            <person name="Sanders M."/>
            <person name="Ogun S.A."/>
            <person name="Cunningham D."/>
            <person name="Erhart A."/>
            <person name="Billker O."/>
            <person name="Khan S.M."/>
            <person name="Stunnenberg H.G."/>
            <person name="Langhorne J."/>
            <person name="Holder A.A."/>
            <person name="Waters A.P."/>
            <person name="Newbold C.I."/>
            <person name="Pain A."/>
            <person name="Berriman M."/>
            <person name="Janse C.J."/>
        </authorList>
    </citation>
    <scope>NUCLEOTIDE SEQUENCE [LARGE SCALE GENOMIC DNA]</scope>
    <source>
        <strain evidence="10">ANKA</strain>
    </source>
</reference>
<reference key="2">
    <citation type="journal article" date="2011" name="Cell. Microbiol.">
        <title>Critical role for a stage-specific actin in male exflagellation of the malaria parasite.</title>
        <authorList>
            <person name="Deligianni E."/>
            <person name="Morgan R.N."/>
            <person name="Bertuccini L."/>
            <person name="Kooij T.W."/>
            <person name="Laforge A."/>
            <person name="Nahar C."/>
            <person name="Poulakakis N."/>
            <person name="Schueler H."/>
            <person name="Louis C."/>
            <person name="Matuschewski K."/>
            <person name="Siden-Kiamos I."/>
        </authorList>
    </citation>
    <scope>SUBCELLULAR LOCATION</scope>
    <scope>DEVELOPMENTAL STAGE</scope>
</reference>
<reference key="3">
    <citation type="journal article" date="2014" name="Cell. Microbiol.">
        <title>Genetic crosses and complementation reveal essential functions for the Plasmodium stage-specific actin2 in sporogonic development.</title>
        <authorList>
            <person name="Andreadaki M."/>
            <person name="Morgan R.N."/>
            <person name="Deligianni E."/>
            <person name="Kooij T.W."/>
            <person name="Santos J.M."/>
            <person name="Spanos L."/>
            <person name="Matuschewski K."/>
            <person name="Louis C."/>
            <person name="Mair G.R."/>
            <person name="Siden-Kiamos I."/>
        </authorList>
    </citation>
    <scope>DEVELOPMENTAL STAGE</scope>
</reference>
<reference evidence="11" key="4">
    <citation type="journal article" date="2014" name="PLoS Pathog.">
        <title>Structural differences explain diverse functions of Plasmodium actins.</title>
        <authorList>
            <person name="Vahokoski J."/>
            <person name="Bhargav S.P."/>
            <person name="Desfosses A."/>
            <person name="Andreadaki M."/>
            <person name="Kumpula E.P."/>
            <person name="Martinez S.M."/>
            <person name="Ignatev A."/>
            <person name="Lepper S."/>
            <person name="Frischknecht F."/>
            <person name="Siden-Kiamos I."/>
            <person name="Sachse C."/>
            <person name="Kursula I."/>
        </authorList>
    </citation>
    <scope>X-RAY CRYSTALLOGRAPHY (2.50 ANGSTROMS) OF 5-39 AND 62-376 IN COMPLEX WITH ATP AND MOUSE GSN</scope>
    <scope>FUNCTION</scope>
    <scope>CATALYTIC ACTIVITY</scope>
    <scope>SUBUNIT</scope>
    <scope>MUTAGENESIS OF 40-LYS--THR-61</scope>
</reference>
<dbReference type="EC" id="3.6.4.-" evidence="5"/>
<dbReference type="EMBL" id="LK023129">
    <property type="protein sequence ID" value="VUC58657.1"/>
    <property type="molecule type" value="Genomic_DNA"/>
</dbReference>
<dbReference type="PDB" id="4CBW">
    <property type="method" value="X-ray"/>
    <property type="resolution" value="2.50 A"/>
    <property type="chains" value="A=5-39, A=62-376"/>
</dbReference>
<dbReference type="PDBsum" id="4CBW"/>
<dbReference type="SMR" id="Q4Z1L3"/>
<dbReference type="STRING" id="5823.A0A509AU65"/>
<dbReference type="ABCD" id="Q4Z1L3">
    <property type="antibodies" value="1 sequenced antibody"/>
</dbReference>
<dbReference type="VEuPathDB" id="PlasmoDB:PBANKA_1459300"/>
<dbReference type="eggNOG" id="KOG0676">
    <property type="taxonomic scope" value="Eukaryota"/>
</dbReference>
<dbReference type="OMA" id="FHTTAER"/>
<dbReference type="EvolutionaryTrace" id="Q4Z1L3"/>
<dbReference type="Proteomes" id="UP000074855">
    <property type="component" value="Chromosome 14"/>
</dbReference>
<dbReference type="GO" id="GO:0005737">
    <property type="term" value="C:cytoplasm"/>
    <property type="evidence" value="ECO:0000314"/>
    <property type="project" value="UniProtKB"/>
</dbReference>
<dbReference type="GO" id="GO:0005856">
    <property type="term" value="C:cytoskeleton"/>
    <property type="evidence" value="ECO:0007669"/>
    <property type="project" value="UniProtKB-SubCell"/>
</dbReference>
<dbReference type="GO" id="GO:0005634">
    <property type="term" value="C:nucleus"/>
    <property type="evidence" value="ECO:0000314"/>
    <property type="project" value="UniProtKB"/>
</dbReference>
<dbReference type="GO" id="GO:0005524">
    <property type="term" value="F:ATP binding"/>
    <property type="evidence" value="ECO:0000314"/>
    <property type="project" value="UniProtKB"/>
</dbReference>
<dbReference type="GO" id="GO:0016887">
    <property type="term" value="F:ATP hydrolysis activity"/>
    <property type="evidence" value="ECO:0000314"/>
    <property type="project" value="UniProtKB"/>
</dbReference>
<dbReference type="CDD" id="cd10224">
    <property type="entry name" value="ASKHA_NBD_actin"/>
    <property type="match status" value="1"/>
</dbReference>
<dbReference type="FunFam" id="2.30.36.70:FF:000001">
    <property type="entry name" value="Actin, alpha skeletal muscle"/>
    <property type="match status" value="1"/>
</dbReference>
<dbReference type="FunFam" id="3.30.420.40:FF:000205">
    <property type="entry name" value="Actin, alpha skeletal muscle"/>
    <property type="match status" value="1"/>
</dbReference>
<dbReference type="FunFam" id="3.90.640.10:FF:000001">
    <property type="entry name" value="Actin, muscle"/>
    <property type="match status" value="1"/>
</dbReference>
<dbReference type="FunFam" id="3.30.420.40:FF:000018">
    <property type="entry name" value="Actin-like protein (Centractin)"/>
    <property type="match status" value="1"/>
</dbReference>
<dbReference type="FunFam" id="3.30.420.40:FF:000404">
    <property type="entry name" value="Major actin"/>
    <property type="match status" value="1"/>
</dbReference>
<dbReference type="FunFam" id="3.30.420.40:FF:000058">
    <property type="entry name" value="Putative actin-related protein 5"/>
    <property type="match status" value="1"/>
</dbReference>
<dbReference type="Gene3D" id="3.30.420.40">
    <property type="match status" value="2"/>
</dbReference>
<dbReference type="Gene3D" id="3.90.640.10">
    <property type="entry name" value="Actin, Chain A, domain 4"/>
    <property type="match status" value="1"/>
</dbReference>
<dbReference type="InterPro" id="IPR004000">
    <property type="entry name" value="Actin"/>
</dbReference>
<dbReference type="InterPro" id="IPR020902">
    <property type="entry name" value="Actin/actin-like_CS"/>
</dbReference>
<dbReference type="InterPro" id="IPR004001">
    <property type="entry name" value="Actin_CS"/>
</dbReference>
<dbReference type="InterPro" id="IPR043129">
    <property type="entry name" value="ATPase_NBD"/>
</dbReference>
<dbReference type="PANTHER" id="PTHR11937">
    <property type="entry name" value="ACTIN"/>
    <property type="match status" value="1"/>
</dbReference>
<dbReference type="Pfam" id="PF00022">
    <property type="entry name" value="Actin"/>
    <property type="match status" value="1"/>
</dbReference>
<dbReference type="PRINTS" id="PR00190">
    <property type="entry name" value="ACTIN"/>
</dbReference>
<dbReference type="SMART" id="SM00268">
    <property type="entry name" value="ACTIN"/>
    <property type="match status" value="1"/>
</dbReference>
<dbReference type="SUPFAM" id="SSF53067">
    <property type="entry name" value="Actin-like ATPase domain"/>
    <property type="match status" value="2"/>
</dbReference>
<dbReference type="PROSITE" id="PS00406">
    <property type="entry name" value="ACTINS_1"/>
    <property type="match status" value="1"/>
</dbReference>
<dbReference type="PROSITE" id="PS00432">
    <property type="entry name" value="ACTINS_2"/>
    <property type="match status" value="1"/>
</dbReference>
<dbReference type="PROSITE" id="PS01132">
    <property type="entry name" value="ACTINS_ACT_LIKE"/>
    <property type="match status" value="1"/>
</dbReference>
<feature type="chain" id="PRO_0000233388" description="Actin-1">
    <location>
        <begin position="1"/>
        <end position="376"/>
    </location>
</feature>
<feature type="region of interest" description="DNAseI-binding D loop; regulates polymerization and stability of the actin filament" evidence="5">
    <location>
        <begin position="40"/>
        <end position="61"/>
    </location>
</feature>
<feature type="binding site" evidence="5 11">
    <location>
        <position position="15"/>
    </location>
    <ligand>
        <name>ATP</name>
        <dbReference type="ChEBI" id="CHEBI:30616"/>
    </ligand>
</feature>
<feature type="binding site" evidence="5 11">
    <location>
        <position position="16"/>
    </location>
    <ligand>
        <name>ATP</name>
        <dbReference type="ChEBI" id="CHEBI:30616"/>
    </ligand>
</feature>
<feature type="binding site" evidence="5 11">
    <location>
        <position position="17"/>
    </location>
    <ligand>
        <name>ATP</name>
        <dbReference type="ChEBI" id="CHEBI:30616"/>
    </ligand>
</feature>
<feature type="binding site" evidence="5 11">
    <location>
        <position position="19"/>
    </location>
    <ligand>
        <name>ATP</name>
        <dbReference type="ChEBI" id="CHEBI:30616"/>
    </ligand>
</feature>
<feature type="binding site" evidence="5 11">
    <location>
        <position position="158"/>
    </location>
    <ligand>
        <name>ATP</name>
        <dbReference type="ChEBI" id="CHEBI:30616"/>
    </ligand>
</feature>
<feature type="binding site" evidence="5 11">
    <location>
        <position position="159"/>
    </location>
    <ligand>
        <name>ATP</name>
        <dbReference type="ChEBI" id="CHEBI:30616"/>
    </ligand>
</feature>
<feature type="binding site" evidence="5 11">
    <location>
        <position position="160"/>
    </location>
    <ligand>
        <name>ATP</name>
        <dbReference type="ChEBI" id="CHEBI:30616"/>
    </ligand>
</feature>
<feature type="binding site" evidence="5 11">
    <location>
        <position position="214"/>
    </location>
    <ligand>
        <name>ATP</name>
        <dbReference type="ChEBI" id="CHEBI:30616"/>
    </ligand>
</feature>
<feature type="binding site" evidence="5 11">
    <location>
        <position position="215"/>
    </location>
    <ligand>
        <name>ATP</name>
        <dbReference type="ChEBI" id="CHEBI:30616"/>
    </ligand>
</feature>
<feature type="binding site" evidence="5 11">
    <location>
        <position position="303"/>
    </location>
    <ligand>
        <name>ATP</name>
        <dbReference type="ChEBI" id="CHEBI:30616"/>
    </ligand>
</feature>
<feature type="mutagenesis site" description="Increases polymerization and, thus actin filament length, by increasing filament stability. Increases inorganic phosphate (Pi) release. Partially restores exflagellation in male gametocytes." evidence="5">
    <original>KNPGIMVGMEEKDAFVGDEAQT</original>
    <variation>RHQGVMVGMGQKDSYVGDEAQS</variation>
    <location>
        <begin position="40"/>
        <end position="61"/>
    </location>
</feature>
<feature type="strand" evidence="12">
    <location>
        <begin position="9"/>
        <end position="12"/>
    </location>
</feature>
<feature type="strand" evidence="12">
    <location>
        <begin position="15"/>
        <end position="22"/>
    </location>
</feature>
<feature type="strand" evidence="12">
    <location>
        <begin position="29"/>
        <end position="33"/>
    </location>
</feature>
<feature type="strand" evidence="12">
    <location>
        <begin position="36"/>
        <end position="39"/>
    </location>
</feature>
<feature type="helix" evidence="12">
    <location>
        <begin position="80"/>
        <end position="92"/>
    </location>
</feature>
<feature type="turn" evidence="12">
    <location>
        <begin position="93"/>
        <end position="95"/>
    </location>
</feature>
<feature type="strand" evidence="12">
    <location>
        <begin position="104"/>
        <end position="108"/>
    </location>
</feature>
<feature type="helix" evidence="12">
    <location>
        <begin position="114"/>
        <end position="126"/>
    </location>
</feature>
<feature type="strand" evidence="12">
    <location>
        <begin position="131"/>
        <end position="137"/>
    </location>
</feature>
<feature type="helix" evidence="12">
    <location>
        <begin position="138"/>
        <end position="145"/>
    </location>
</feature>
<feature type="strand" evidence="12">
    <location>
        <begin position="149"/>
        <end position="156"/>
    </location>
</feature>
<feature type="strand" evidence="12">
    <location>
        <begin position="161"/>
        <end position="167"/>
    </location>
</feature>
<feature type="helix" evidence="12">
    <location>
        <begin position="173"/>
        <end position="175"/>
    </location>
</feature>
<feature type="strand" evidence="12">
    <location>
        <begin position="177"/>
        <end position="180"/>
    </location>
</feature>
<feature type="helix" evidence="12">
    <location>
        <begin position="183"/>
        <end position="193"/>
    </location>
</feature>
<feature type="helix" evidence="12">
    <location>
        <begin position="194"/>
        <end position="197"/>
    </location>
</feature>
<feature type="helix" evidence="12">
    <location>
        <begin position="206"/>
        <end position="217"/>
    </location>
</feature>
<feature type="helix" evidence="12">
    <location>
        <begin position="224"/>
        <end position="233"/>
    </location>
</feature>
<feature type="strand" evidence="12">
    <location>
        <begin position="239"/>
        <end position="242"/>
    </location>
</feature>
<feature type="strand" evidence="12">
    <location>
        <begin position="248"/>
        <end position="251"/>
    </location>
</feature>
<feature type="helix" evidence="12">
    <location>
        <begin position="254"/>
        <end position="257"/>
    </location>
</feature>
<feature type="helix" evidence="12">
    <location>
        <begin position="259"/>
        <end position="262"/>
    </location>
</feature>
<feature type="helix" evidence="12">
    <location>
        <begin position="265"/>
        <end position="268"/>
    </location>
</feature>
<feature type="helix" evidence="12">
    <location>
        <begin position="275"/>
        <end position="284"/>
    </location>
</feature>
<feature type="helix" evidence="12">
    <location>
        <begin position="288"/>
        <end position="290"/>
    </location>
</feature>
<feature type="helix" evidence="12">
    <location>
        <begin position="291"/>
        <end position="295"/>
    </location>
</feature>
<feature type="strand" evidence="12">
    <location>
        <begin position="298"/>
        <end position="302"/>
    </location>
</feature>
<feature type="helix" evidence="12">
    <location>
        <begin position="303"/>
        <end position="306"/>
    </location>
</feature>
<feature type="helix" evidence="12">
    <location>
        <begin position="310"/>
        <end position="321"/>
    </location>
</feature>
<feature type="turn" evidence="12">
    <location>
        <begin position="334"/>
        <end position="337"/>
    </location>
</feature>
<feature type="helix" evidence="12">
    <location>
        <begin position="339"/>
        <end position="347"/>
    </location>
</feature>
<feature type="strand" evidence="12">
    <location>
        <begin position="350"/>
        <end position="352"/>
    </location>
</feature>
<feature type="helix" evidence="12">
    <location>
        <begin position="353"/>
        <end position="355"/>
    </location>
</feature>
<feature type="strand" evidence="12">
    <location>
        <begin position="357"/>
        <end position="359"/>
    </location>
</feature>
<feature type="helix" evidence="12">
    <location>
        <begin position="360"/>
        <end position="366"/>
    </location>
</feature>
<feature type="helix" evidence="12">
    <location>
        <begin position="368"/>
        <end position="370"/>
    </location>
</feature>
<feature type="helix" evidence="12">
    <location>
        <begin position="371"/>
        <end position="374"/>
    </location>
</feature>
<evidence type="ECO:0000250" key="1">
    <source>
        <dbReference type="UniProtKB" id="P86287"/>
    </source>
</evidence>
<evidence type="ECO:0000250" key="2">
    <source>
        <dbReference type="UniProtKB" id="Q8I4X0"/>
    </source>
</evidence>
<evidence type="ECO:0000269" key="3">
    <source>
    </source>
</evidence>
<evidence type="ECO:0000269" key="4">
    <source>
    </source>
</evidence>
<evidence type="ECO:0000269" key="5">
    <source>
    </source>
</evidence>
<evidence type="ECO:0000303" key="6">
    <source>
    </source>
</evidence>
<evidence type="ECO:0000303" key="7">
    <source>
    </source>
</evidence>
<evidence type="ECO:0000303" key="8">
    <source>
    </source>
</evidence>
<evidence type="ECO:0000305" key="9"/>
<evidence type="ECO:0000312" key="10">
    <source>
        <dbReference type="Proteomes" id="UP000074855"/>
    </source>
</evidence>
<evidence type="ECO:0007744" key="11">
    <source>
        <dbReference type="PDB" id="4CBW"/>
    </source>
</evidence>
<evidence type="ECO:0007829" key="12">
    <source>
        <dbReference type="PDB" id="4CBW"/>
    </source>
</evidence>
<protein>
    <recommendedName>
        <fullName evidence="7">Actin-1</fullName>
        <ecNumber evidence="5">3.6.4.-</ecNumber>
    </recommendedName>
    <alternativeName>
        <fullName evidence="6">Actin I</fullName>
        <shortName evidence="8">PbACT I</shortName>
    </alternativeName>
</protein>
<comment type="function">
    <text evidence="2 5">Actin is a highly conserved protein that polymerizes to produce filaments that form cross-linked networks in the cytoplasm (PubMed:24743229). Polymerizes into shorter and less stable actin filaments compared to ACT2/actin-2; this is thought to facilitate gliding motility and host cell invasion (PubMed:24743229). Has ATPase activity (PubMed:24743229). ATP hydrolysis leads to the formation of a stable intermediate ADP-inorganic phosphate (Pi) actin, which is followed by the release of Pi (By similarity). ATP hydrolysis affects filament stability; ADP-bound actin depolymerizes much faster than ATP- or ADP-Pi-bound actin (By similarity). Plays an essential role during the asexual blood stage (By similarity). At the segmented schizont stage, required for apicoplast migration and segregation into individual daughter merozoites (By similarity). Also, required for the separation of daughter merozoites in the final stages of cytokinesis (By similarity). Essential for merozoite invasion of, but not adhesion to or reorientation towards, host erythrocytes (By similarity).</text>
</comment>
<comment type="catalytic activity">
    <reaction evidence="5">
        <text>ATP + H2O = ADP + phosphate + H(+)</text>
        <dbReference type="Rhea" id="RHEA:13065"/>
        <dbReference type="ChEBI" id="CHEBI:15377"/>
        <dbReference type="ChEBI" id="CHEBI:15378"/>
        <dbReference type="ChEBI" id="CHEBI:30616"/>
        <dbReference type="ChEBI" id="CHEBI:43474"/>
        <dbReference type="ChEBI" id="CHEBI:456216"/>
    </reaction>
</comment>
<comment type="activity regulation">
    <text evidence="2">ATP hydrolysis occurs in the polymeric state. Unlike for mammalian actin, ATP hydrolysis also occurs in the monomeric form and the release of inorganic phosphate (Pi) is more efficient.</text>
</comment>
<comment type="subunit">
    <text evidence="1 2 5">Monomer (G-actin) (PubMed:24743229). Oligomer (F-actin) (PubMed:24743229). Polymerization of globular actin (G-actin) leads to a structural filament (F-actin) in the form of a two-stranded helix (PubMed:24743229). Unlike for mammalian monomeric actin, parasite monomeric actin is able to induce oligomerization in the presence of ATP or ADP (By similarity). Mg(2+), which is used to coordinate ATP, is required for polymerization (By similarity). Interacts with MyoA (By similarity). Interacts with DNase I with low affinity (By similarity).</text>
</comment>
<comment type="subcellular location">
    <subcellularLocation>
        <location evidence="3">Cytoplasm</location>
    </subcellularLocation>
    <subcellularLocation>
        <location evidence="3">Nucleus</location>
    </subcellularLocation>
    <subcellularLocation>
        <location evidence="2">Cytoplasm</location>
        <location evidence="2">Cytoskeleton</location>
    </subcellularLocation>
    <text evidence="2 3">During host erythrocyte invasion, filamentous actin localizes close to the junction between merozoites and the host cell (By similarity). In schizonts, filamentous actin appears to connect apicoplasts (By similarity). Prior to gametocyte activation in the mosquito midgut, localizes to both the cytoplasm and the nucleus (PubMed:21790945). Following gametocyte activation, relocalizes completely to the cytoplasm, in an ACT2-dependent manner (PubMed:21790945).</text>
</comment>
<comment type="developmental stage">
    <text evidence="3 4">Expressed in male gametocytes (at protein level) (PubMed:21790945). Expressed in ookinetes and oocysts (at protein level) (PubMed:24471657).</text>
</comment>
<comment type="miscellaneous">
    <text evidence="2">A potassium ion appears to reside in the active site during hydrolysis and leaves together with the inorganic phosphate Pi. K(+) does not activate Pi release; however, it may be relevant for ATP hydrolysis.</text>
</comment>
<comment type="miscellaneous">
    <text evidence="4">ACT1 and ACT2 differ in their polymerization, filament stability and helical structure (PubMed:24471657). Unlike mammalian actin, Apicomplexa actins do not form long and stable filaments (PubMed:24471657).</text>
</comment>
<comment type="similarity">
    <text evidence="9">Belongs to the actin family.</text>
</comment>
<accession>Q4Z1L3</accession>
<accession>A0A509AU65</accession>
<proteinExistence type="evidence at protein level"/>